<organism>
    <name type="scientific">Enterococcus faecalis (strain ATCC 700802 / V583)</name>
    <dbReference type="NCBI Taxonomy" id="226185"/>
    <lineage>
        <taxon>Bacteria</taxon>
        <taxon>Bacillati</taxon>
        <taxon>Bacillota</taxon>
        <taxon>Bacilli</taxon>
        <taxon>Lactobacillales</taxon>
        <taxon>Enterococcaceae</taxon>
        <taxon>Enterococcus</taxon>
    </lineage>
</organism>
<name>RS8_ENTFA</name>
<sequence>MVMTDPIADFLTRIRNANMVKHETLEVPASKIKRDIAEILKREGFIRDVEYIEDDKQGVIRVFLKYGKNEERVITNLKRISKPGLRAYVKADEVPKVLNGLGIAIISTSEGVITDKEARAKNIGGEVIAYVW</sequence>
<accession>Q839F0</accession>
<gene>
    <name evidence="1" type="primary">rpsH</name>
    <name type="ordered locus">EF_0220</name>
</gene>
<proteinExistence type="evidence at protein level"/>
<comment type="function">
    <text evidence="1">One of the primary rRNA binding proteins, it binds directly to 16S rRNA central domain where it helps coordinate assembly of the platform of the 30S subunit.</text>
</comment>
<comment type="subunit">
    <text evidence="1">Part of the 30S ribosomal subunit. Contacts proteins S5 and S12.</text>
</comment>
<comment type="similarity">
    <text evidence="1">Belongs to the universal ribosomal protein uS8 family.</text>
</comment>
<feature type="chain" id="PRO_0000126408" description="Small ribosomal subunit protein uS8">
    <location>
        <begin position="1"/>
        <end position="132"/>
    </location>
</feature>
<feature type="helix" evidence="3">
    <location>
        <begin position="6"/>
        <end position="19"/>
    </location>
</feature>
<feature type="strand" evidence="3">
    <location>
        <begin position="25"/>
        <end position="27"/>
    </location>
</feature>
<feature type="helix" evidence="3">
    <location>
        <begin position="31"/>
        <end position="42"/>
    </location>
</feature>
<feature type="strand" evidence="3">
    <location>
        <begin position="47"/>
        <end position="51"/>
    </location>
</feature>
<feature type="strand" evidence="3">
    <location>
        <begin position="54"/>
        <end position="57"/>
    </location>
</feature>
<feature type="strand" evidence="3">
    <location>
        <begin position="60"/>
        <end position="63"/>
    </location>
</feature>
<feature type="strand" evidence="3">
    <location>
        <begin position="77"/>
        <end position="79"/>
    </location>
</feature>
<feature type="turn" evidence="3">
    <location>
        <begin position="97"/>
        <end position="101"/>
    </location>
</feature>
<feature type="strand" evidence="3">
    <location>
        <begin position="102"/>
        <end position="108"/>
    </location>
</feature>
<feature type="strand" evidence="3">
    <location>
        <begin position="111"/>
        <end position="114"/>
    </location>
</feature>
<feature type="helix" evidence="3">
    <location>
        <begin position="115"/>
        <end position="121"/>
    </location>
</feature>
<feature type="strand" evidence="3">
    <location>
        <begin position="126"/>
        <end position="131"/>
    </location>
</feature>
<dbReference type="EMBL" id="AE016830">
    <property type="protein sequence ID" value="AAO80089.1"/>
    <property type="molecule type" value="Genomic_DNA"/>
</dbReference>
<dbReference type="RefSeq" id="NP_814018.1">
    <property type="nucleotide sequence ID" value="NC_004668.1"/>
</dbReference>
<dbReference type="RefSeq" id="WP_002356215.1">
    <property type="nucleotide sequence ID" value="NZ_KE136524.1"/>
</dbReference>
<dbReference type="PDB" id="6WUB">
    <property type="method" value="EM"/>
    <property type="resolution" value="3.20 A"/>
    <property type="chains" value="h=2-132"/>
</dbReference>
<dbReference type="PDB" id="7P7Q">
    <property type="method" value="EM"/>
    <property type="resolution" value="2.40 A"/>
    <property type="chains" value="i=1-132"/>
</dbReference>
<dbReference type="PDB" id="7P7R">
    <property type="method" value="EM"/>
    <property type="resolution" value="2.90 A"/>
    <property type="chains" value="i=1-132"/>
</dbReference>
<dbReference type="PDBsum" id="6WUB"/>
<dbReference type="PDBsum" id="7P7Q"/>
<dbReference type="PDBsum" id="7P7R"/>
<dbReference type="EMDB" id="EMD-13241"/>
<dbReference type="EMDB" id="EMD-13242"/>
<dbReference type="SMR" id="Q839F0"/>
<dbReference type="STRING" id="226185.EF_0220"/>
<dbReference type="EnsemblBacteria" id="AAO80089">
    <property type="protein sequence ID" value="AAO80089"/>
    <property type="gene ID" value="EF_0220"/>
</dbReference>
<dbReference type="GeneID" id="60892715"/>
<dbReference type="KEGG" id="efa:EF0220"/>
<dbReference type="PATRIC" id="fig|226185.45.peg.46"/>
<dbReference type="eggNOG" id="COG0096">
    <property type="taxonomic scope" value="Bacteria"/>
</dbReference>
<dbReference type="HOGENOM" id="CLU_098428_0_2_9"/>
<dbReference type="Proteomes" id="UP000001415">
    <property type="component" value="Chromosome"/>
</dbReference>
<dbReference type="GO" id="GO:1990904">
    <property type="term" value="C:ribonucleoprotein complex"/>
    <property type="evidence" value="ECO:0007669"/>
    <property type="project" value="UniProtKB-KW"/>
</dbReference>
<dbReference type="GO" id="GO:0005840">
    <property type="term" value="C:ribosome"/>
    <property type="evidence" value="ECO:0007669"/>
    <property type="project" value="UniProtKB-KW"/>
</dbReference>
<dbReference type="GO" id="GO:0019843">
    <property type="term" value="F:rRNA binding"/>
    <property type="evidence" value="ECO:0007669"/>
    <property type="project" value="UniProtKB-UniRule"/>
</dbReference>
<dbReference type="GO" id="GO:0003735">
    <property type="term" value="F:structural constituent of ribosome"/>
    <property type="evidence" value="ECO:0007669"/>
    <property type="project" value="InterPro"/>
</dbReference>
<dbReference type="GO" id="GO:0006412">
    <property type="term" value="P:translation"/>
    <property type="evidence" value="ECO:0007669"/>
    <property type="project" value="UniProtKB-UniRule"/>
</dbReference>
<dbReference type="FunFam" id="3.30.1370.30:FF:000002">
    <property type="entry name" value="30S ribosomal protein S8"/>
    <property type="match status" value="1"/>
</dbReference>
<dbReference type="FunFam" id="3.30.1490.10:FF:000001">
    <property type="entry name" value="30S ribosomal protein S8"/>
    <property type="match status" value="1"/>
</dbReference>
<dbReference type="Gene3D" id="3.30.1370.30">
    <property type="match status" value="1"/>
</dbReference>
<dbReference type="Gene3D" id="3.30.1490.10">
    <property type="match status" value="1"/>
</dbReference>
<dbReference type="HAMAP" id="MF_01302_B">
    <property type="entry name" value="Ribosomal_uS8_B"/>
    <property type="match status" value="1"/>
</dbReference>
<dbReference type="InterPro" id="IPR000630">
    <property type="entry name" value="Ribosomal_uS8"/>
</dbReference>
<dbReference type="InterPro" id="IPR047863">
    <property type="entry name" value="Ribosomal_uS8_CS"/>
</dbReference>
<dbReference type="InterPro" id="IPR035987">
    <property type="entry name" value="Ribosomal_uS8_sf"/>
</dbReference>
<dbReference type="NCBIfam" id="NF001109">
    <property type="entry name" value="PRK00136.1"/>
    <property type="match status" value="1"/>
</dbReference>
<dbReference type="PANTHER" id="PTHR11758">
    <property type="entry name" value="40S RIBOSOMAL PROTEIN S15A"/>
    <property type="match status" value="1"/>
</dbReference>
<dbReference type="Pfam" id="PF00410">
    <property type="entry name" value="Ribosomal_S8"/>
    <property type="match status" value="1"/>
</dbReference>
<dbReference type="SUPFAM" id="SSF56047">
    <property type="entry name" value="Ribosomal protein S8"/>
    <property type="match status" value="1"/>
</dbReference>
<dbReference type="PROSITE" id="PS00053">
    <property type="entry name" value="RIBOSOMAL_S8"/>
    <property type="match status" value="1"/>
</dbReference>
<evidence type="ECO:0000255" key="1">
    <source>
        <dbReference type="HAMAP-Rule" id="MF_01302"/>
    </source>
</evidence>
<evidence type="ECO:0000305" key="2"/>
<evidence type="ECO:0007829" key="3">
    <source>
        <dbReference type="PDB" id="6WUB"/>
    </source>
</evidence>
<protein>
    <recommendedName>
        <fullName evidence="1">Small ribosomal subunit protein uS8</fullName>
    </recommendedName>
    <alternativeName>
        <fullName evidence="2">30S ribosomal protein S8</fullName>
    </alternativeName>
</protein>
<reference key="1">
    <citation type="journal article" date="2003" name="Science">
        <title>Role of mobile DNA in the evolution of vancomycin-resistant Enterococcus faecalis.</title>
        <authorList>
            <person name="Paulsen I.T."/>
            <person name="Banerjei L."/>
            <person name="Myers G.S.A."/>
            <person name="Nelson K.E."/>
            <person name="Seshadri R."/>
            <person name="Read T.D."/>
            <person name="Fouts D.E."/>
            <person name="Eisen J.A."/>
            <person name="Gill S.R."/>
            <person name="Heidelberg J.F."/>
            <person name="Tettelin H."/>
            <person name="Dodson R.J."/>
            <person name="Umayam L.A."/>
            <person name="Brinkac L.M."/>
            <person name="Beanan M.J."/>
            <person name="Daugherty S.C."/>
            <person name="DeBoy R.T."/>
            <person name="Durkin S.A."/>
            <person name="Kolonay J.F."/>
            <person name="Madupu R."/>
            <person name="Nelson W.C."/>
            <person name="Vamathevan J.J."/>
            <person name="Tran B."/>
            <person name="Upton J."/>
            <person name="Hansen T."/>
            <person name="Shetty J."/>
            <person name="Khouri H.M."/>
            <person name="Utterback T.R."/>
            <person name="Radune D."/>
            <person name="Ketchum K.A."/>
            <person name="Dougherty B.A."/>
            <person name="Fraser C.M."/>
        </authorList>
    </citation>
    <scope>NUCLEOTIDE SEQUENCE [LARGE SCALE GENOMIC DNA]</scope>
    <source>
        <strain>ATCC 700802 / V583</strain>
    </source>
</reference>
<keyword id="KW-0002">3D-structure</keyword>
<keyword id="KW-1185">Reference proteome</keyword>
<keyword id="KW-0687">Ribonucleoprotein</keyword>
<keyword id="KW-0689">Ribosomal protein</keyword>
<keyword id="KW-0694">RNA-binding</keyword>
<keyword id="KW-0699">rRNA-binding</keyword>